<accession>Q6DIN8</accession>
<protein>
    <recommendedName>
        <fullName>THAP domain-containing protein 1</fullName>
    </recommendedName>
</protein>
<gene>
    <name type="primary">thap1</name>
    <name type="ORF">TGas105m14.1</name>
</gene>
<sequence>MVQSCSAYGCKNRYDKDKPISFHKFPLKRPLLCRKWEAAVRRADFKPTKYSSICSDHFTADCFKRECNNKLLKDNAVPTIFAHTEIKKKSGKAVKKEQLPAEPEPVPSVPEVDPAIGLLLPPLYTPSHIAVICDHNYTVEDTVHQRRRIQQLEEQVDKLRKKLKIANQKCRRQERSLEKLEREVSEYREAKGSGYVIFPGNYYEVLNENEYKELAPEITYKEIIL</sequence>
<proteinExistence type="evidence at transcript level"/>
<dbReference type="EMBL" id="CR762254">
    <property type="protein sequence ID" value="CAJ81990.1"/>
    <property type="molecule type" value="mRNA"/>
</dbReference>
<dbReference type="EMBL" id="BC075499">
    <property type="protein sequence ID" value="AAH75499.1"/>
    <property type="molecule type" value="mRNA"/>
</dbReference>
<dbReference type="RefSeq" id="NP_001006738.1">
    <property type="nucleotide sequence ID" value="NM_001006737.1"/>
</dbReference>
<dbReference type="SMR" id="Q6DIN8"/>
<dbReference type="FunCoup" id="Q6DIN8">
    <property type="interactions" value="3668"/>
</dbReference>
<dbReference type="STRING" id="8364.ENSXETP00000032044"/>
<dbReference type="PaxDb" id="8364-ENSXETP00000022480"/>
<dbReference type="DNASU" id="448407"/>
<dbReference type="GeneID" id="448407"/>
<dbReference type="KEGG" id="xtr:448407"/>
<dbReference type="AGR" id="Xenbase:XB-GENE-1008758"/>
<dbReference type="CTD" id="55145"/>
<dbReference type="Xenbase" id="XB-GENE-1008758">
    <property type="gene designation" value="thap1"/>
</dbReference>
<dbReference type="eggNOG" id="KOG1721">
    <property type="taxonomic scope" value="Eukaryota"/>
</dbReference>
<dbReference type="HOGENOM" id="CLU_076186_2_1_1"/>
<dbReference type="InParanoid" id="Q6DIN8"/>
<dbReference type="OMA" id="TKDCFKR"/>
<dbReference type="OrthoDB" id="9867479at2759"/>
<dbReference type="PhylomeDB" id="Q6DIN8"/>
<dbReference type="TreeFam" id="TF330127"/>
<dbReference type="Proteomes" id="UP000008143">
    <property type="component" value="Chromosome 1"/>
</dbReference>
<dbReference type="Bgee" id="ENSXETG00000010197">
    <property type="expression patterns" value="Expressed in ovary and 13 other cell types or tissues"/>
</dbReference>
<dbReference type="GO" id="GO:0005654">
    <property type="term" value="C:nucleoplasm"/>
    <property type="evidence" value="ECO:0007669"/>
    <property type="project" value="UniProtKB-SubCell"/>
</dbReference>
<dbReference type="GO" id="GO:0043565">
    <property type="term" value="F:sequence-specific DNA binding"/>
    <property type="evidence" value="ECO:0000250"/>
    <property type="project" value="UniProtKB"/>
</dbReference>
<dbReference type="GO" id="GO:0008270">
    <property type="term" value="F:zinc ion binding"/>
    <property type="evidence" value="ECO:0007669"/>
    <property type="project" value="UniProtKB-KW"/>
</dbReference>
<dbReference type="Gene3D" id="6.20.210.20">
    <property type="entry name" value="THAP domain"/>
    <property type="match status" value="1"/>
</dbReference>
<dbReference type="InterPro" id="IPR026516">
    <property type="entry name" value="THAP1/10"/>
</dbReference>
<dbReference type="InterPro" id="IPR006612">
    <property type="entry name" value="THAP_Znf"/>
</dbReference>
<dbReference type="InterPro" id="IPR038441">
    <property type="entry name" value="THAP_Znf_sf"/>
</dbReference>
<dbReference type="PANTHER" id="PTHR46600">
    <property type="entry name" value="THAP DOMAIN-CONTAINING"/>
    <property type="match status" value="1"/>
</dbReference>
<dbReference type="PANTHER" id="PTHR46600:SF1">
    <property type="entry name" value="THAP DOMAIN-CONTAINING PROTEIN 1"/>
    <property type="match status" value="1"/>
</dbReference>
<dbReference type="Pfam" id="PF05485">
    <property type="entry name" value="THAP"/>
    <property type="match status" value="1"/>
</dbReference>
<dbReference type="SMART" id="SM00692">
    <property type="entry name" value="DM3"/>
    <property type="match status" value="1"/>
</dbReference>
<dbReference type="SMART" id="SM00980">
    <property type="entry name" value="THAP"/>
    <property type="match status" value="1"/>
</dbReference>
<dbReference type="SUPFAM" id="SSF57716">
    <property type="entry name" value="Glucocorticoid receptor-like (DNA-binding domain)"/>
    <property type="match status" value="1"/>
</dbReference>
<dbReference type="PROSITE" id="PS50950">
    <property type="entry name" value="ZF_THAP"/>
    <property type="match status" value="1"/>
</dbReference>
<keyword id="KW-0131">Cell cycle</keyword>
<keyword id="KW-0175">Coiled coil</keyword>
<keyword id="KW-0238">DNA-binding</keyword>
<keyword id="KW-0479">Metal-binding</keyword>
<keyword id="KW-0539">Nucleus</keyword>
<keyword id="KW-1185">Reference proteome</keyword>
<keyword id="KW-0804">Transcription</keyword>
<keyword id="KW-0805">Transcription regulation</keyword>
<keyword id="KW-0862">Zinc</keyword>
<keyword id="KW-0863">Zinc-finger</keyword>
<feature type="chain" id="PRO_0000367847" description="THAP domain-containing protein 1">
    <location>
        <begin position="1"/>
        <end position="225"/>
    </location>
</feature>
<feature type="zinc finger region" description="THAP-type" evidence="3">
    <location>
        <begin position="5"/>
        <end position="57"/>
    </location>
</feature>
<feature type="coiled-coil region" evidence="2">
    <location>
        <begin position="139"/>
        <end position="194"/>
    </location>
</feature>
<evidence type="ECO:0000250" key="1"/>
<evidence type="ECO:0000255" key="2"/>
<evidence type="ECO:0000255" key="3">
    <source>
        <dbReference type="PROSITE-ProRule" id="PRU00309"/>
    </source>
</evidence>
<evidence type="ECO:0000305" key="4"/>
<reference key="1">
    <citation type="submission" date="2006-10" db="EMBL/GenBank/DDBJ databases">
        <authorList>
            <consortium name="Sanger Xenopus tropicalis EST/cDNA project"/>
        </authorList>
    </citation>
    <scope>NUCLEOTIDE SEQUENCE [LARGE SCALE MRNA]</scope>
    <source>
        <tissue>Gastrula</tissue>
    </source>
</reference>
<reference key="2">
    <citation type="submission" date="2004-06" db="EMBL/GenBank/DDBJ databases">
        <authorList>
            <consortium name="NIH - Xenopus Gene Collection (XGC) project"/>
        </authorList>
    </citation>
    <scope>NUCLEOTIDE SEQUENCE [LARGE SCALE MRNA]</scope>
    <source>
        <tissue>Embryo</tissue>
    </source>
</reference>
<organism>
    <name type="scientific">Xenopus tropicalis</name>
    <name type="common">Western clawed frog</name>
    <name type="synonym">Silurana tropicalis</name>
    <dbReference type="NCBI Taxonomy" id="8364"/>
    <lineage>
        <taxon>Eukaryota</taxon>
        <taxon>Metazoa</taxon>
        <taxon>Chordata</taxon>
        <taxon>Craniata</taxon>
        <taxon>Vertebrata</taxon>
        <taxon>Euteleostomi</taxon>
        <taxon>Amphibia</taxon>
        <taxon>Batrachia</taxon>
        <taxon>Anura</taxon>
        <taxon>Pipoidea</taxon>
        <taxon>Pipidae</taxon>
        <taxon>Xenopodinae</taxon>
        <taxon>Xenopus</taxon>
        <taxon>Silurana</taxon>
    </lineage>
</organism>
<name>THAP1_XENTR</name>
<comment type="function">
    <text evidence="1">DNA-binding transcription regulator that regulates endothelial cell proliferation and G1/S cell-cycle progression. Specifically binds the 5'-[AT]NTNN[GT]GGCA[AGT]-3' core DNA sequence and acts by modulating expression of pRB-E2F cell-cycle target genes (By similarity).</text>
</comment>
<comment type="subcellular location">
    <subcellularLocation>
        <location evidence="1">Nucleus</location>
        <location evidence="1">Nucleoplasm</location>
    </subcellularLocation>
</comment>
<comment type="similarity">
    <text evidence="4">Belongs to the THAP1 family.</text>
</comment>